<name>SBOA_BACSU</name>
<proteinExistence type="evidence at protein level"/>
<gene>
    <name type="primary">sboA</name>
    <name type="synonym">sbo</name>
    <name type="ordered locus">BSU37350</name>
</gene>
<dbReference type="EMBL" id="AJ430547">
    <property type="protein sequence ID" value="CAD23198.1"/>
    <property type="molecule type" value="Genomic_DNA"/>
</dbReference>
<dbReference type="EMBL" id="Z97024">
    <property type="protein sequence ID" value="CAB09701.1"/>
    <property type="molecule type" value="Genomic_DNA"/>
</dbReference>
<dbReference type="EMBL" id="AL009126">
    <property type="protein sequence ID" value="CAB15763.1"/>
    <property type="molecule type" value="Genomic_DNA"/>
</dbReference>
<dbReference type="PIR" id="A69704">
    <property type="entry name" value="A69704"/>
</dbReference>
<dbReference type="RefSeq" id="NP_391616.1">
    <property type="nucleotide sequence ID" value="NC_000964.3"/>
</dbReference>
<dbReference type="RefSeq" id="WP_003222002.1">
    <property type="nucleotide sequence ID" value="NZ_OZ025638.1"/>
</dbReference>
<dbReference type="PDB" id="1PXQ">
    <property type="method" value="NMR"/>
    <property type="chains" value="A=9-43"/>
</dbReference>
<dbReference type="PDBsum" id="1PXQ"/>
<dbReference type="BMRB" id="O07623"/>
<dbReference type="SMR" id="O07623"/>
<dbReference type="FunCoup" id="O07623">
    <property type="interactions" value="46"/>
</dbReference>
<dbReference type="STRING" id="224308.BSU37350"/>
<dbReference type="TCDB" id="1.C.84.1.1">
    <property type="family name" value="the subtilosin (subtilosin) family"/>
</dbReference>
<dbReference type="PaxDb" id="224308-BSU37350"/>
<dbReference type="EnsemblBacteria" id="CAB15763">
    <property type="protein sequence ID" value="CAB15763"/>
    <property type="gene ID" value="BSU_37350"/>
</dbReference>
<dbReference type="GeneID" id="86871644"/>
<dbReference type="GeneID" id="938512"/>
<dbReference type="KEGG" id="bsu:BSU37350"/>
<dbReference type="PATRIC" id="fig|224308.179.peg.4046"/>
<dbReference type="InParanoid" id="O07623"/>
<dbReference type="OrthoDB" id="2401484at2"/>
<dbReference type="BioCyc" id="BSUB:BSU37350-MONOMER"/>
<dbReference type="EvolutionaryTrace" id="O07623"/>
<dbReference type="PRO" id="PR:O07623"/>
<dbReference type="Proteomes" id="UP000001570">
    <property type="component" value="Chromosome"/>
</dbReference>
<dbReference type="GO" id="GO:0005576">
    <property type="term" value="C:extracellular region"/>
    <property type="evidence" value="ECO:0007669"/>
    <property type="project" value="UniProtKB-SubCell"/>
</dbReference>
<dbReference type="GO" id="GO:0042742">
    <property type="term" value="P:defense response to bacterium"/>
    <property type="evidence" value="ECO:0007669"/>
    <property type="project" value="UniProtKB-KW"/>
</dbReference>
<dbReference type="GO" id="GO:0031640">
    <property type="term" value="P:killing of cells of another organism"/>
    <property type="evidence" value="ECO:0007669"/>
    <property type="project" value="UniProtKB-KW"/>
</dbReference>
<dbReference type="InterPro" id="IPR021539">
    <property type="entry name" value="Subtilosin_A"/>
</dbReference>
<dbReference type="Pfam" id="PF11420">
    <property type="entry name" value="Subtilosin_A"/>
    <property type="match status" value="1"/>
</dbReference>
<sequence>MKKAVIVENKGCATCSIGAACLVDGPIPDFEIAGATGLFGLWG</sequence>
<protein>
    <recommendedName>
        <fullName>Subtilosin-A</fullName>
    </recommendedName>
    <alternativeName>
        <fullName>Antilisterial bacteriocin subtilosin</fullName>
    </alternativeName>
</protein>
<evidence type="ECO:0000269" key="1">
    <source>
    </source>
</evidence>
<evidence type="ECO:0000269" key="2">
    <source>
    </source>
</evidence>
<evidence type="ECO:0000269" key="3">
    <source>
    </source>
</evidence>
<evidence type="ECO:0000269" key="4">
    <source>
    </source>
</evidence>
<evidence type="ECO:0000269" key="5">
    <source>
    </source>
</evidence>
<evidence type="ECO:0000269" key="6">
    <source>
    </source>
</evidence>
<evidence type="ECO:0000305" key="7"/>
<evidence type="ECO:0007829" key="8">
    <source>
        <dbReference type="PDB" id="1PXQ"/>
    </source>
</evidence>
<keyword id="KW-0002">3D-structure</keyword>
<keyword id="KW-0044">Antibiotic</keyword>
<keyword id="KW-0929">Antimicrobial</keyword>
<keyword id="KW-0078">Bacteriocin</keyword>
<keyword id="KW-0208">D-amino acid</keyword>
<keyword id="KW-0903">Direct protein sequencing</keyword>
<keyword id="KW-1185">Reference proteome</keyword>
<keyword id="KW-0964">Secreted</keyword>
<keyword id="KW-0883">Thioether bond</keyword>
<organism>
    <name type="scientific">Bacillus subtilis (strain 168)</name>
    <dbReference type="NCBI Taxonomy" id="224308"/>
    <lineage>
        <taxon>Bacteria</taxon>
        <taxon>Bacillati</taxon>
        <taxon>Bacillota</taxon>
        <taxon>Bacilli</taxon>
        <taxon>Bacillales</taxon>
        <taxon>Bacillaceae</taxon>
        <taxon>Bacillus</taxon>
    </lineage>
</organism>
<accession>O07623</accession>
<feature type="propeptide" id="PRO_0000002780" evidence="6">
    <location>
        <begin position="1"/>
        <end position="8"/>
    </location>
</feature>
<feature type="peptide" id="PRO_0000002781" description="Subtilosin-A" evidence="6">
    <location>
        <begin position="9"/>
        <end position="43"/>
    </location>
</feature>
<feature type="cross-link" description="Cyclopeptide (Asn-Gly)" evidence="3">
    <location>
        <begin position="9"/>
        <end position="43"/>
    </location>
</feature>
<feature type="cross-link" description="2-cysteinyl-D-phenylalanine (Cys-Phe)" evidence="3 5">
    <location>
        <begin position="12"/>
        <end position="39"/>
    </location>
</feature>
<feature type="cross-link" description="2-cysteinyl-D-allo-threonine (Cys-Thr)" evidence="3 5">
    <location>
        <begin position="15"/>
        <end position="36"/>
    </location>
</feature>
<feature type="cross-link" description="2-cysteinyl-L-phenylalanine (Cys-Phe)" evidence="3 5">
    <location>
        <begin position="21"/>
        <end position="30"/>
    </location>
</feature>
<feature type="mutagenesis site" description="No thioether bonds formed." evidence="5">
    <location>
        <begin position="1"/>
        <end position="8"/>
    </location>
</feature>
<feature type="mutagenesis site" description="In vitro no longer makes the first thioether cross-link, in vivo no cyclopeptide formed." evidence="5">
    <original>C</original>
    <variation>A</variation>
    <location>
        <position position="12"/>
    </location>
</feature>
<feature type="mutagenesis site" description="In vivo forms 2 thioether cross-links, no cyclopeptide formed." evidence="5">
    <original>C</original>
    <variation>S</variation>
    <location>
        <position position="12"/>
    </location>
</feature>
<feature type="mutagenesis site" description="In sboA1; protein has acquired hemolytic activity and is more effective against tested Gram-positive bacteria." evidence="4">
    <original>T</original>
    <variation>I</variation>
    <location>
        <position position="14"/>
    </location>
</feature>
<feature type="mutagenesis site" description="In vitro can no longer make the Cys-thioether cross-link, variable loss of the other 2 thioether cross-links, in vivo no cyclopeptide formed." evidence="5">
    <original>C</original>
    <variation>A</variation>
    <location>
        <position position="15"/>
    </location>
</feature>
<feature type="mutagenesis site" description="In vivo forms 2 thioether cross-links, no cyclopeptide formed." evidence="5">
    <original>C</original>
    <variation>S</variation>
    <location>
        <position position="15"/>
    </location>
</feature>
<feature type="mutagenesis site" description="In vitro no longer makes the second thioether cross-link, in vivo no cyclopeptide formed." evidence="5">
    <original>C</original>
    <variation>A</variation>
    <location>
        <position position="21"/>
    </location>
</feature>
<feature type="mutagenesis site" description="In vivo forms 2 thioether cross-links, no cyclopeptide formed." evidence="5">
    <original>C</original>
    <variation>S</variation>
    <location>
        <position position="21"/>
    </location>
</feature>
<feature type="mutagenesis site" description="In vivo forms 2 thioether cross-links, no cyclopeptide formed." evidence="5">
    <original>F</original>
    <variation>S</variation>
    <location>
        <position position="30"/>
    </location>
</feature>
<feature type="mutagenesis site" description="In vivo forms 2 thioether cross-links, no cyclopeptide formed." evidence="5">
    <original>T</original>
    <variation>S</variation>
    <location>
        <position position="36"/>
    </location>
</feature>
<feature type="mutagenesis site" description="In vivo forms 2 thioether cross-links, no cyclopeptide formed." evidence="5">
    <original>F</original>
    <variation>S</variation>
    <location>
        <position position="39"/>
    </location>
</feature>
<feature type="mutagenesis site" description="In vivo forms 3 thioether cross-links, forms the cyclopeptide." evidence="5">
    <original>F</original>
    <variation>Y</variation>
    <location>
        <position position="39"/>
    </location>
</feature>
<feature type="turn" evidence="8">
    <location>
        <begin position="12"/>
        <end position="15"/>
    </location>
</feature>
<feature type="turn" evidence="8">
    <location>
        <begin position="23"/>
        <end position="26"/>
    </location>
</feature>
<feature type="helix" evidence="8">
    <location>
        <begin position="37"/>
        <end position="42"/>
    </location>
</feature>
<comment type="function">
    <text evidence="1 4 6">Has bacteriocidal activity against some Gram-positive bacteria such as Listeria, some species of Bacillus and E.faecium (PubMed:10572140, PubMed:19633086, PubMed:3936839). A single mutation (Thr-14-Ile) confers hemolytic activity against rabbit and human blood (PubMed:19633086).</text>
</comment>
<comment type="subcellular location">
    <subcellularLocation>
        <location evidence="6">Secreted</location>
    </subcellularLocation>
</comment>
<comment type="developmental stage">
    <text evidence="6">The production of subtilosin A begins at the end of vegetative growth and finishes before spore formation.</text>
</comment>
<comment type="induction">
    <text evidence="2">Transcription is highly induced by oxygen limitation and is under dual and independent control of Spo0A-AbrB and ResDE.</text>
</comment>
<comment type="PTM">
    <text evidence="3 5">This sactipeptide undergoes unique processing steps that include proteolytic cleavage after Glu-8, and covalent linkage of the alpha-amino of Asn-9 with the carboxyl of Gly-43 to form a cyclopeptide (PubMed:12696888, PubMed:22366720). Thioether cross-links are formed between cysteines and the alpha-carbons of other amino acids, Cys-12 to Phe-39, Cys-15 to Thr-36, and Cys-21 to Phe-30 (PubMed:12696888, PubMed:22366720). In forming these cross-links, Thr-36 and Phe-39 are converted to D-amino acids (PubMed:12696888). Propeptide cleavage and cyclopeptide formation only occur after all 3 thioether cross-links are formed (PubMed:22366720).</text>
</comment>
<comment type="mass spectrometry"/>
<comment type="mass spectrometry">
    <text>The Thr-14-Ile mutant.</text>
</comment>
<comment type="similarity">
    <text evidence="7">Belongs to the bacteriocin class V family.</text>
</comment>
<comment type="caution">
    <text evidence="7">PubMed:3936839 sequence does not report residues in positions 30 and 39 probably due to their modification, and reports a cyclic permutation of the peptide sequence.</text>
</comment>
<reference key="1">
    <citation type="submission" date="2002-02" db="EMBL/GenBank/DDBJ databases">
        <title>Subtilosin A biosynthesis is conserved among two different classes of Bacillus subtilis strains.</title>
        <authorList>
            <person name="Stein T."/>
            <person name="Duesterhus S."/>
            <person name="Entian K.-D."/>
        </authorList>
    </citation>
    <scope>NUCLEOTIDE SEQUENCE [GENOMIC DNA]</scope>
    <source>
        <strain>ATCC 6633 / PCI 219 / NRS 231</strain>
    </source>
</reference>
<reference key="2">
    <citation type="journal article" date="1997" name="Microbiology">
        <title>The Bacillus subtilis genome from gerBC (311 degrees) to licR (334 degrees).</title>
        <authorList>
            <person name="Presecan E."/>
            <person name="Moszer I."/>
            <person name="Boursier L."/>
            <person name="Cruz Ramos H."/>
            <person name="De La Fuente V."/>
            <person name="Hullo M.-F."/>
            <person name="Lelong C."/>
            <person name="Schleich S."/>
            <person name="Sekowska A."/>
            <person name="Song B.H."/>
            <person name="Villani G."/>
            <person name="Kunst F."/>
            <person name="Danchin A."/>
            <person name="Glaser P."/>
        </authorList>
    </citation>
    <scope>NUCLEOTIDE SEQUENCE [GENOMIC DNA]</scope>
    <source>
        <strain>168</strain>
    </source>
</reference>
<reference key="3">
    <citation type="journal article" date="1997" name="Nature">
        <title>The complete genome sequence of the Gram-positive bacterium Bacillus subtilis.</title>
        <authorList>
            <person name="Kunst F."/>
            <person name="Ogasawara N."/>
            <person name="Moszer I."/>
            <person name="Albertini A.M."/>
            <person name="Alloni G."/>
            <person name="Azevedo V."/>
            <person name="Bertero M.G."/>
            <person name="Bessieres P."/>
            <person name="Bolotin A."/>
            <person name="Borchert S."/>
            <person name="Borriss R."/>
            <person name="Boursier L."/>
            <person name="Brans A."/>
            <person name="Braun M."/>
            <person name="Brignell S.C."/>
            <person name="Bron S."/>
            <person name="Brouillet S."/>
            <person name="Bruschi C.V."/>
            <person name="Caldwell B."/>
            <person name="Capuano V."/>
            <person name="Carter N.M."/>
            <person name="Choi S.-K."/>
            <person name="Codani J.-J."/>
            <person name="Connerton I.F."/>
            <person name="Cummings N.J."/>
            <person name="Daniel R.A."/>
            <person name="Denizot F."/>
            <person name="Devine K.M."/>
            <person name="Duesterhoeft A."/>
            <person name="Ehrlich S.D."/>
            <person name="Emmerson P.T."/>
            <person name="Entian K.-D."/>
            <person name="Errington J."/>
            <person name="Fabret C."/>
            <person name="Ferrari E."/>
            <person name="Foulger D."/>
            <person name="Fritz C."/>
            <person name="Fujita M."/>
            <person name="Fujita Y."/>
            <person name="Fuma S."/>
            <person name="Galizzi A."/>
            <person name="Galleron N."/>
            <person name="Ghim S.-Y."/>
            <person name="Glaser P."/>
            <person name="Goffeau A."/>
            <person name="Golightly E.J."/>
            <person name="Grandi G."/>
            <person name="Guiseppi G."/>
            <person name="Guy B.J."/>
            <person name="Haga K."/>
            <person name="Haiech J."/>
            <person name="Harwood C.R."/>
            <person name="Henaut A."/>
            <person name="Hilbert H."/>
            <person name="Holsappel S."/>
            <person name="Hosono S."/>
            <person name="Hullo M.-F."/>
            <person name="Itaya M."/>
            <person name="Jones L.-M."/>
            <person name="Joris B."/>
            <person name="Karamata D."/>
            <person name="Kasahara Y."/>
            <person name="Klaerr-Blanchard M."/>
            <person name="Klein C."/>
            <person name="Kobayashi Y."/>
            <person name="Koetter P."/>
            <person name="Koningstein G."/>
            <person name="Krogh S."/>
            <person name="Kumano M."/>
            <person name="Kurita K."/>
            <person name="Lapidus A."/>
            <person name="Lardinois S."/>
            <person name="Lauber J."/>
            <person name="Lazarevic V."/>
            <person name="Lee S.-M."/>
            <person name="Levine A."/>
            <person name="Liu H."/>
            <person name="Masuda S."/>
            <person name="Mauel C."/>
            <person name="Medigue C."/>
            <person name="Medina N."/>
            <person name="Mellado R.P."/>
            <person name="Mizuno M."/>
            <person name="Moestl D."/>
            <person name="Nakai S."/>
            <person name="Noback M."/>
            <person name="Noone D."/>
            <person name="O'Reilly M."/>
            <person name="Ogawa K."/>
            <person name="Ogiwara A."/>
            <person name="Oudega B."/>
            <person name="Park S.-H."/>
            <person name="Parro V."/>
            <person name="Pohl T.M."/>
            <person name="Portetelle D."/>
            <person name="Porwollik S."/>
            <person name="Prescott A.M."/>
            <person name="Presecan E."/>
            <person name="Pujic P."/>
            <person name="Purnelle B."/>
            <person name="Rapoport G."/>
            <person name="Rey M."/>
            <person name="Reynolds S."/>
            <person name="Rieger M."/>
            <person name="Rivolta C."/>
            <person name="Rocha E."/>
            <person name="Roche B."/>
            <person name="Rose M."/>
            <person name="Sadaie Y."/>
            <person name="Sato T."/>
            <person name="Scanlan E."/>
            <person name="Schleich S."/>
            <person name="Schroeter R."/>
            <person name="Scoffone F."/>
            <person name="Sekiguchi J."/>
            <person name="Sekowska A."/>
            <person name="Seror S.J."/>
            <person name="Serror P."/>
            <person name="Shin B.-S."/>
            <person name="Soldo B."/>
            <person name="Sorokin A."/>
            <person name="Tacconi E."/>
            <person name="Takagi T."/>
            <person name="Takahashi H."/>
            <person name="Takemaru K."/>
            <person name="Takeuchi M."/>
            <person name="Tamakoshi A."/>
            <person name="Tanaka T."/>
            <person name="Terpstra P."/>
            <person name="Tognoni A."/>
            <person name="Tosato V."/>
            <person name="Uchiyama S."/>
            <person name="Vandenbol M."/>
            <person name="Vannier F."/>
            <person name="Vassarotti A."/>
            <person name="Viari A."/>
            <person name="Wambutt R."/>
            <person name="Wedler E."/>
            <person name="Wedler H."/>
            <person name="Weitzenegger T."/>
            <person name="Winters P."/>
            <person name="Wipat A."/>
            <person name="Yamamoto H."/>
            <person name="Yamane K."/>
            <person name="Yasumoto K."/>
            <person name="Yata K."/>
            <person name="Yoshida K."/>
            <person name="Yoshikawa H.-F."/>
            <person name="Zumstein E."/>
            <person name="Yoshikawa H."/>
            <person name="Danchin A."/>
        </authorList>
    </citation>
    <scope>NUCLEOTIDE SEQUENCE [LARGE SCALE GENOMIC DNA]</scope>
    <source>
        <strain>168</strain>
    </source>
</reference>
<reference key="4">
    <citation type="journal article" date="1985" name="J. Biochem.">
        <title>Subtilosin A, a new antibiotic peptide produced by Bacillus subtilis 168: isolation, structural analysis, and biogenesis.</title>
        <authorList>
            <person name="Babasaki K."/>
            <person name="Takao T."/>
            <person name="Shimonishi Y."/>
            <person name="Kurahashi K."/>
        </authorList>
    </citation>
    <scope>PROTEIN SEQUENCE OF 9-43</scope>
    <scope>FUNCTION</scope>
    <scope>SUBCELLULAR LOCATION</scope>
    <scope>DEVELOPMENTAL STAGE</scope>
    <scope>MASS SPECTROMETRY</scope>
    <source>
        <strain>168</strain>
    </source>
</reference>
<reference key="5">
    <citation type="journal article" date="1999" name="J. Bacteriol.">
        <title>Genes of the sbo-alb locus of Bacillus subtilis are required for production of the antilisterial bacteriocin subtilosin.</title>
        <authorList>
            <person name="Zheng G."/>
            <person name="Yan L.Z."/>
            <person name="Vederas J.C."/>
            <person name="Zuber P."/>
        </authorList>
    </citation>
    <scope>FUNCTION</scope>
    <source>
        <strain>168 / JH642</strain>
        <strain>22a</strain>
    </source>
</reference>
<reference key="6">
    <citation type="journal article" date="2000" name="J. Bacteriol.">
        <title>Dual control of sbo-alb operon expression by the Spo0 and ResDE systems of signal transduction under anaerobic conditions in Bacillus subtilis.</title>
        <authorList>
            <person name="Nakano M.M."/>
            <person name="Zheng G."/>
            <person name="Zuber P."/>
        </authorList>
    </citation>
    <scope>TRANSCRIPTIONAL REGULATION</scope>
    <source>
        <strain>168 / JH642</strain>
    </source>
</reference>
<reference key="7">
    <citation type="journal article" date="2009" name="J. Bacteriol.">
        <title>Isolation of a variant of subtilosin A with hemolytic activity.</title>
        <authorList>
            <person name="Huang T."/>
            <person name="Geng H."/>
            <person name="Miyyapuram V.R."/>
            <person name="Sit C.S."/>
            <person name="Vederas J.C."/>
            <person name="Nakano M.M."/>
        </authorList>
    </citation>
    <scope>FUNCTION</scope>
    <scope>MASS SPECTROMETRY</scope>
    <scope>MUTAGENESIS OF THR-14</scope>
    <source>
        <strain>168 / JH642</strain>
    </source>
</reference>
<reference key="8">
    <citation type="journal article" date="2012" name="Nat. Chem. Biol.">
        <title>The radical SAM enzyme AlbA catalyzes thioether bond formation in subtilosin A.</title>
        <authorList>
            <person name="Fluehe L."/>
            <person name="Knappe T.A."/>
            <person name="Gattner M.J."/>
            <person name="Schaefer A."/>
            <person name="Burghaus O."/>
            <person name="Linne U."/>
            <person name="Marahiel M.A."/>
        </authorList>
    </citation>
    <scope>CROSS-LINKS CYS-PHE AND CYS-THR</scope>
    <scope>MUTAGENESIS OF 1-MET--GLU-8; CYS-12; CYS-15; CYS-21; PHE-30; THR-36 AND PHE-39</scope>
    <source>
        <strain>168</strain>
    </source>
</reference>
<reference key="9">
    <citation type="journal article" date="2003" name="J. Am. Chem. Soc.">
        <title>Structure of subtilosin A, an antimicrobial peptide from Bacillus subtilis with unusual posttranslational modifications linking cysteine sulfurs to alpha-carbons of phenylalanine and threonine.</title>
        <authorList>
            <person name="Kawulka K."/>
            <person name="Sprules T."/>
            <person name="McKay R.T."/>
            <person name="Mercier P."/>
            <person name="Diaper C.M."/>
            <person name="Zuber P."/>
            <person name="Vederas J.C."/>
        </authorList>
    </citation>
    <scope>STRUCTURE BY NMR</scope>
    <scope>CROSS-LINKS CYS-PHE AND CYS-THR</scope>
</reference>
<reference key="10">
    <citation type="unpublished observations" date="2003-05">
        <authorList>
            <person name="Vederas J.C."/>
        </authorList>
    </citation>
    <scope>STEREOCHEMISTRY OF D-ALLO-THR-36</scope>
</reference>